<evidence type="ECO:0000255" key="1">
    <source>
        <dbReference type="HAMAP-Rule" id="MF_00210"/>
    </source>
</evidence>
<protein>
    <recommendedName>
        <fullName evidence="1">3-phosphoshikimate 1-carboxyvinyltransferase</fullName>
        <ecNumber evidence="1">2.5.1.19</ecNumber>
    </recommendedName>
    <alternativeName>
        <fullName evidence="1">5-enolpyruvylshikimate-3-phosphate synthase</fullName>
        <shortName evidence="1">EPSP synthase</shortName>
        <shortName evidence="1">EPSPS</shortName>
    </alternativeName>
</protein>
<feature type="chain" id="PRO_0000088308" description="3-phosphoshikimate 1-carboxyvinyltransferase">
    <location>
        <begin position="1"/>
        <end position="430"/>
    </location>
</feature>
<feature type="active site" description="Proton acceptor" evidence="1">
    <location>
        <position position="315"/>
    </location>
</feature>
<feature type="binding site" evidence="1">
    <location>
        <position position="23"/>
    </location>
    <ligand>
        <name>3-phosphoshikimate</name>
        <dbReference type="ChEBI" id="CHEBI:145989"/>
    </ligand>
</feature>
<feature type="binding site" evidence="1">
    <location>
        <position position="23"/>
    </location>
    <ligand>
        <name>phosphoenolpyruvate</name>
        <dbReference type="ChEBI" id="CHEBI:58702"/>
    </ligand>
</feature>
<feature type="binding site" evidence="1">
    <location>
        <position position="24"/>
    </location>
    <ligand>
        <name>3-phosphoshikimate</name>
        <dbReference type="ChEBI" id="CHEBI:145989"/>
    </ligand>
</feature>
<feature type="binding site" evidence="1">
    <location>
        <position position="28"/>
    </location>
    <ligand>
        <name>3-phosphoshikimate</name>
        <dbReference type="ChEBI" id="CHEBI:145989"/>
    </ligand>
</feature>
<feature type="binding site" evidence="1">
    <location>
        <position position="95"/>
    </location>
    <ligand>
        <name>phosphoenolpyruvate</name>
        <dbReference type="ChEBI" id="CHEBI:58702"/>
    </ligand>
</feature>
<feature type="binding site" evidence="1">
    <location>
        <position position="123"/>
    </location>
    <ligand>
        <name>phosphoenolpyruvate</name>
        <dbReference type="ChEBI" id="CHEBI:58702"/>
    </ligand>
</feature>
<feature type="binding site" evidence="1">
    <location>
        <position position="169"/>
    </location>
    <ligand>
        <name>3-phosphoshikimate</name>
        <dbReference type="ChEBI" id="CHEBI:145989"/>
    </ligand>
</feature>
<feature type="binding site" evidence="1">
    <location>
        <position position="171"/>
    </location>
    <ligand>
        <name>3-phosphoshikimate</name>
        <dbReference type="ChEBI" id="CHEBI:145989"/>
    </ligand>
</feature>
<feature type="binding site" evidence="1">
    <location>
        <position position="171"/>
    </location>
    <ligand>
        <name>phosphoenolpyruvate</name>
        <dbReference type="ChEBI" id="CHEBI:58702"/>
    </ligand>
</feature>
<feature type="binding site" evidence="1">
    <location>
        <position position="315"/>
    </location>
    <ligand>
        <name>3-phosphoshikimate</name>
        <dbReference type="ChEBI" id="CHEBI:145989"/>
    </ligand>
</feature>
<feature type="binding site" evidence="1">
    <location>
        <position position="342"/>
    </location>
    <ligand>
        <name>3-phosphoshikimate</name>
        <dbReference type="ChEBI" id="CHEBI:145989"/>
    </ligand>
</feature>
<feature type="binding site" evidence="1">
    <location>
        <position position="346"/>
    </location>
    <ligand>
        <name>phosphoenolpyruvate</name>
        <dbReference type="ChEBI" id="CHEBI:58702"/>
    </ligand>
</feature>
<feature type="binding site" evidence="1">
    <location>
        <position position="388"/>
    </location>
    <ligand>
        <name>phosphoenolpyruvate</name>
        <dbReference type="ChEBI" id="CHEBI:58702"/>
    </ligand>
</feature>
<proteinExistence type="inferred from homology"/>
<organism>
    <name type="scientific">Streptococcus pyogenes serotype M6 (strain ATCC BAA-946 / MGAS10394)</name>
    <dbReference type="NCBI Taxonomy" id="286636"/>
    <lineage>
        <taxon>Bacteria</taxon>
        <taxon>Bacillati</taxon>
        <taxon>Bacillota</taxon>
        <taxon>Bacilli</taxon>
        <taxon>Lactobacillales</taxon>
        <taxon>Streptococcaceae</taxon>
        <taxon>Streptococcus</taxon>
    </lineage>
</organism>
<accession>Q5XBK5</accession>
<dbReference type="EC" id="2.5.1.19" evidence="1"/>
<dbReference type="EMBL" id="CP000003">
    <property type="protein sequence ID" value="AAT87208.1"/>
    <property type="molecule type" value="Genomic_DNA"/>
</dbReference>
<dbReference type="SMR" id="Q5XBK5"/>
<dbReference type="KEGG" id="spa:M6_Spy1073"/>
<dbReference type="HOGENOM" id="CLU_024321_0_1_9"/>
<dbReference type="UniPathway" id="UPA00053">
    <property type="reaction ID" value="UER00089"/>
</dbReference>
<dbReference type="Proteomes" id="UP000001167">
    <property type="component" value="Chromosome"/>
</dbReference>
<dbReference type="GO" id="GO:0005737">
    <property type="term" value="C:cytoplasm"/>
    <property type="evidence" value="ECO:0007669"/>
    <property type="project" value="UniProtKB-SubCell"/>
</dbReference>
<dbReference type="GO" id="GO:0003866">
    <property type="term" value="F:3-phosphoshikimate 1-carboxyvinyltransferase activity"/>
    <property type="evidence" value="ECO:0007669"/>
    <property type="project" value="UniProtKB-UniRule"/>
</dbReference>
<dbReference type="GO" id="GO:0008652">
    <property type="term" value="P:amino acid biosynthetic process"/>
    <property type="evidence" value="ECO:0007669"/>
    <property type="project" value="UniProtKB-KW"/>
</dbReference>
<dbReference type="GO" id="GO:0009073">
    <property type="term" value="P:aromatic amino acid family biosynthetic process"/>
    <property type="evidence" value="ECO:0007669"/>
    <property type="project" value="UniProtKB-KW"/>
</dbReference>
<dbReference type="GO" id="GO:0009423">
    <property type="term" value="P:chorismate biosynthetic process"/>
    <property type="evidence" value="ECO:0007669"/>
    <property type="project" value="UniProtKB-UniRule"/>
</dbReference>
<dbReference type="CDD" id="cd01556">
    <property type="entry name" value="EPSP_synthase"/>
    <property type="match status" value="1"/>
</dbReference>
<dbReference type="FunFam" id="3.65.10.10:FF:000005">
    <property type="entry name" value="3-phosphoshikimate 1-carboxyvinyltransferase"/>
    <property type="match status" value="1"/>
</dbReference>
<dbReference type="FunFam" id="3.65.10.10:FF:000006">
    <property type="entry name" value="3-phosphoshikimate 1-carboxyvinyltransferase"/>
    <property type="match status" value="1"/>
</dbReference>
<dbReference type="Gene3D" id="3.65.10.10">
    <property type="entry name" value="Enolpyruvate transferase domain"/>
    <property type="match status" value="2"/>
</dbReference>
<dbReference type="HAMAP" id="MF_00210">
    <property type="entry name" value="EPSP_synth"/>
    <property type="match status" value="1"/>
</dbReference>
<dbReference type="InterPro" id="IPR001986">
    <property type="entry name" value="Enolpyruvate_Tfrase_dom"/>
</dbReference>
<dbReference type="InterPro" id="IPR036968">
    <property type="entry name" value="Enolpyruvate_Tfrase_sf"/>
</dbReference>
<dbReference type="InterPro" id="IPR006264">
    <property type="entry name" value="EPSP_synthase"/>
</dbReference>
<dbReference type="InterPro" id="IPR023193">
    <property type="entry name" value="EPSP_synthase_CS"/>
</dbReference>
<dbReference type="InterPro" id="IPR013792">
    <property type="entry name" value="RNA3'P_cycl/enolpyr_Trfase_a/b"/>
</dbReference>
<dbReference type="NCBIfam" id="TIGR01356">
    <property type="entry name" value="aroA"/>
    <property type="match status" value="1"/>
</dbReference>
<dbReference type="PANTHER" id="PTHR21090">
    <property type="entry name" value="AROM/DEHYDROQUINATE SYNTHASE"/>
    <property type="match status" value="1"/>
</dbReference>
<dbReference type="PANTHER" id="PTHR21090:SF5">
    <property type="entry name" value="PENTAFUNCTIONAL AROM POLYPEPTIDE"/>
    <property type="match status" value="1"/>
</dbReference>
<dbReference type="Pfam" id="PF00275">
    <property type="entry name" value="EPSP_synthase"/>
    <property type="match status" value="1"/>
</dbReference>
<dbReference type="PIRSF" id="PIRSF000505">
    <property type="entry name" value="EPSPS"/>
    <property type="match status" value="1"/>
</dbReference>
<dbReference type="SUPFAM" id="SSF55205">
    <property type="entry name" value="EPT/RTPC-like"/>
    <property type="match status" value="1"/>
</dbReference>
<dbReference type="PROSITE" id="PS00104">
    <property type="entry name" value="EPSP_SYNTHASE_1"/>
    <property type="match status" value="1"/>
</dbReference>
<dbReference type="PROSITE" id="PS00885">
    <property type="entry name" value="EPSP_SYNTHASE_2"/>
    <property type="match status" value="1"/>
</dbReference>
<sequence>MKRMKLRTNAGPLQGTIQVPGDKSISHRAVILGAVAKGETRVKGLLKGEDVLSTIQAFRNLGVRIEEKDDQLVIEGQGFQGLTAPCQTLNMGNSGTSMRLIAGLLAGQPFSVKMIGDESLSKRPMDRIVYPLKQMGVEISGETDRQFPPLQLQGNRNLQPITYTLPISSAQVKSAILLAALQAKGTTQVVEKEITRNHTEEMIQQFGGRLIVDGKRITLVGPQQLTAQEITVPGDISSAAFWLVAGLIIPGSELLLKNVGVNPTRTGILEVVEKMGAQIVYEDMNKKEQVTSIRVVYSHLKGTIISGGLIPRLIDELPIIALLATQAQGTTCIKDAQELRVKETDRIQVVTDTLNSMGANIKATADGMIIKGPTVLYGANTSTYGDHRIGMMTAIAALLVKQGQVHLDKEEAIMTSYPTFFKDLERLCHD</sequence>
<reference key="1">
    <citation type="journal article" date="2004" name="J. Infect. Dis.">
        <title>Progress toward characterization of the group A Streptococcus metagenome: complete genome sequence of a macrolide-resistant serotype M6 strain.</title>
        <authorList>
            <person name="Banks D.J."/>
            <person name="Porcella S.F."/>
            <person name="Barbian K.D."/>
            <person name="Beres S.B."/>
            <person name="Philips L.E."/>
            <person name="Voyich J.M."/>
            <person name="DeLeo F.R."/>
            <person name="Martin J.M."/>
            <person name="Somerville G.A."/>
            <person name="Musser J.M."/>
        </authorList>
    </citation>
    <scope>NUCLEOTIDE SEQUENCE [LARGE SCALE GENOMIC DNA]</scope>
    <source>
        <strain>ATCC BAA-946 / MGAS10394</strain>
    </source>
</reference>
<keyword id="KW-0028">Amino-acid biosynthesis</keyword>
<keyword id="KW-0057">Aromatic amino acid biosynthesis</keyword>
<keyword id="KW-0963">Cytoplasm</keyword>
<keyword id="KW-0808">Transferase</keyword>
<gene>
    <name evidence="1" type="primary">aroA</name>
    <name type="ordered locus">M6_Spy1073</name>
</gene>
<name>AROA_STRP6</name>
<comment type="function">
    <text evidence="1">Catalyzes the transfer of the enolpyruvyl moiety of phosphoenolpyruvate (PEP) to the 5-hydroxyl of shikimate-3-phosphate (S3P) to produce enolpyruvyl shikimate-3-phosphate and inorganic phosphate.</text>
</comment>
<comment type="catalytic activity">
    <reaction evidence="1">
        <text>3-phosphoshikimate + phosphoenolpyruvate = 5-O-(1-carboxyvinyl)-3-phosphoshikimate + phosphate</text>
        <dbReference type="Rhea" id="RHEA:21256"/>
        <dbReference type="ChEBI" id="CHEBI:43474"/>
        <dbReference type="ChEBI" id="CHEBI:57701"/>
        <dbReference type="ChEBI" id="CHEBI:58702"/>
        <dbReference type="ChEBI" id="CHEBI:145989"/>
        <dbReference type="EC" id="2.5.1.19"/>
    </reaction>
    <physiologicalReaction direction="left-to-right" evidence="1">
        <dbReference type="Rhea" id="RHEA:21257"/>
    </physiologicalReaction>
</comment>
<comment type="pathway">
    <text evidence="1">Metabolic intermediate biosynthesis; chorismate biosynthesis; chorismate from D-erythrose 4-phosphate and phosphoenolpyruvate: step 6/7.</text>
</comment>
<comment type="subunit">
    <text evidence="1">Monomer.</text>
</comment>
<comment type="subcellular location">
    <subcellularLocation>
        <location evidence="1">Cytoplasm</location>
    </subcellularLocation>
</comment>
<comment type="similarity">
    <text evidence="1">Belongs to the EPSP synthase family.</text>
</comment>